<sequence length="132" mass="13473">MQIKGHRICGGRATGPALVSKDAISFLGGVDPGTGTVIEKGHALYGKNVKGTVLIFPGGKGSTVGSYVIYQLMKNGVAPAAMINIKAEPIVAVGAIISGIPMVDRLEQNPVETIKDGDTVTVDGTAGIIELS</sequence>
<proteinExistence type="inferred from homology"/>
<comment type="function">
    <text evidence="1">Component of a hydro-lyase that catalyzes the dehydration of mevalonate 5-phosphate (MVA5P) to form trans-anhydromevalonate 5-phosphate (tAHMP). Involved in the archaeal mevalonate (MVA) pathway, which provides fundamental precursors for isoprenoid biosynthesis, such as isopentenyl diphosphate (IPP) and dimethylallyl diphosphate (DMAPP).</text>
</comment>
<comment type="catalytic activity">
    <reaction evidence="1">
        <text>(R)-5-phosphomevalonate = (2E)-3-methyl-5-phosphooxypent-2-enoate + H2O</text>
        <dbReference type="Rhea" id="RHEA:78975"/>
        <dbReference type="ChEBI" id="CHEBI:15377"/>
        <dbReference type="ChEBI" id="CHEBI:58146"/>
        <dbReference type="ChEBI" id="CHEBI:229665"/>
        <dbReference type="EC" id="4.2.1.182"/>
    </reaction>
    <physiologicalReaction direction="left-to-right" evidence="1">
        <dbReference type="Rhea" id="RHEA:78976"/>
    </physiologicalReaction>
</comment>
<comment type="pathway">
    <text evidence="1">Isoprenoid biosynthesis; isopentenyl diphosphate biosynthesis via mevalonate pathway.</text>
</comment>
<comment type="subunit">
    <text evidence="1">Heterodimer composed of a large subunit (PMDh-L) and a small subunit (PMDh-S).</text>
</comment>
<comment type="similarity">
    <text evidence="1">Belongs to the AcnX type II small subunit family.</text>
</comment>
<evidence type="ECO:0000255" key="1">
    <source>
        <dbReference type="HAMAP-Rule" id="MF_00078"/>
    </source>
</evidence>
<dbReference type="EC" id="4.2.1.182" evidence="1"/>
<dbReference type="EMBL" id="AM114193">
    <property type="protein sequence ID" value="CAJ35230.1"/>
    <property type="molecule type" value="Genomic_DNA"/>
</dbReference>
<dbReference type="RefSeq" id="WP_012037260.1">
    <property type="nucleotide sequence ID" value="NC_009464.1"/>
</dbReference>
<dbReference type="SMR" id="Q0W8R3"/>
<dbReference type="STRING" id="351160.LRC241"/>
<dbReference type="GeneID" id="5143721"/>
<dbReference type="KEGG" id="rci:LRC241"/>
<dbReference type="PATRIC" id="fig|351160.9.peg.3023"/>
<dbReference type="eggNOG" id="arCOG04279">
    <property type="taxonomic scope" value="Archaea"/>
</dbReference>
<dbReference type="OrthoDB" id="18062at2157"/>
<dbReference type="UniPathway" id="UPA00057"/>
<dbReference type="Proteomes" id="UP000000663">
    <property type="component" value="Chromosome"/>
</dbReference>
<dbReference type="GO" id="GO:0016836">
    <property type="term" value="F:hydro-lyase activity"/>
    <property type="evidence" value="ECO:0007669"/>
    <property type="project" value="UniProtKB-UniRule"/>
</dbReference>
<dbReference type="GO" id="GO:0019287">
    <property type="term" value="P:isopentenyl diphosphate biosynthetic process, mevalonate pathway"/>
    <property type="evidence" value="ECO:0007669"/>
    <property type="project" value="UniProtKB-UniRule"/>
</dbReference>
<dbReference type="CDD" id="cd01356">
    <property type="entry name" value="AcnX_swivel"/>
    <property type="match status" value="1"/>
</dbReference>
<dbReference type="Gene3D" id="3.50.30.10">
    <property type="entry name" value="Phosphohistidine domain"/>
    <property type="match status" value="1"/>
</dbReference>
<dbReference type="HAMAP" id="MF_00078">
    <property type="entry name" value="PMDh_S"/>
    <property type="match status" value="1"/>
</dbReference>
<dbReference type="InterPro" id="IPR012016">
    <property type="entry name" value="PMDh-S-like"/>
</dbReference>
<dbReference type="InterPro" id="IPR002840">
    <property type="entry name" value="PMDh-S-like_dom"/>
</dbReference>
<dbReference type="InterPro" id="IPR020794">
    <property type="entry name" value="PMDh_S"/>
</dbReference>
<dbReference type="NCBIfam" id="NF003046">
    <property type="entry name" value="PRK03955.1"/>
    <property type="match status" value="1"/>
</dbReference>
<dbReference type="PANTHER" id="PTHR36577">
    <property type="entry name" value="DUF521 DOMAIN PROTEIN (AFU_ORTHOLOGUE AFUA_6G00490)"/>
    <property type="match status" value="1"/>
</dbReference>
<dbReference type="PANTHER" id="PTHR36577:SF3">
    <property type="entry name" value="DUF521 DOMAIN PROTEIN (AFU_ORTHOLOGUE AFUA_6G00490)"/>
    <property type="match status" value="1"/>
</dbReference>
<dbReference type="Pfam" id="PF01989">
    <property type="entry name" value="AcnX_swivel_put"/>
    <property type="match status" value="1"/>
</dbReference>
<dbReference type="PIRSF" id="PIRSF004966">
    <property type="entry name" value="UCP004966"/>
    <property type="match status" value="1"/>
</dbReference>
<dbReference type="SUPFAM" id="SSF52016">
    <property type="entry name" value="LeuD/IlvD-like"/>
    <property type="match status" value="1"/>
</dbReference>
<accession>Q0W8R3</accession>
<protein>
    <recommendedName>
        <fullName evidence="1">Phosphomevalonate dehydratase small subunit</fullName>
        <shortName evidence="1">PMDh small subunit</shortName>
        <shortName evidence="1">PMDh-S</shortName>
        <ecNumber evidence="1">4.2.1.182</ecNumber>
    </recommendedName>
</protein>
<feature type="chain" id="PRO_1000009475" description="Phosphomevalonate dehydratase small subunit">
    <location>
        <begin position="1"/>
        <end position="132"/>
    </location>
</feature>
<feature type="active site" description="Proton acceptor" evidence="1">
    <location>
        <position position="62"/>
    </location>
</feature>
<organism>
    <name type="scientific">Methanocella arvoryzae (strain DSM 22066 / NBRC 105507 / MRE50)</name>
    <dbReference type="NCBI Taxonomy" id="351160"/>
    <lineage>
        <taxon>Archaea</taxon>
        <taxon>Methanobacteriati</taxon>
        <taxon>Methanobacteriota</taxon>
        <taxon>Stenosarchaea group</taxon>
        <taxon>Methanomicrobia</taxon>
        <taxon>Methanocellales</taxon>
        <taxon>Methanocellaceae</taxon>
        <taxon>Methanocella</taxon>
    </lineage>
</organism>
<gene>
    <name type="ordered locus">UNCMA_29450</name>
    <name type="ORF">LRC241</name>
</gene>
<keyword id="KW-0414">Isoprene biosynthesis</keyword>
<keyword id="KW-0456">Lyase</keyword>
<keyword id="KW-1185">Reference proteome</keyword>
<reference key="1">
    <citation type="journal article" date="2006" name="Science">
        <title>Genome of rice cluster I archaea -- the key methane producers in the rice rhizosphere.</title>
        <authorList>
            <person name="Erkel C."/>
            <person name="Kube M."/>
            <person name="Reinhardt R."/>
            <person name="Liesack W."/>
        </authorList>
    </citation>
    <scope>NUCLEOTIDE SEQUENCE [LARGE SCALE GENOMIC DNA]</scope>
    <source>
        <strain>DSM 22066 / NBRC 105507 / MRE50</strain>
    </source>
</reference>
<name>PMDHS_METAR</name>